<comment type="function">
    <text evidence="1">Involved in mRNA degradation. Catalyzes the phosphorolysis of single-stranded polyribonucleotides processively in the 3'- to 5'-direction.</text>
</comment>
<comment type="catalytic activity">
    <reaction evidence="1">
        <text>RNA(n+1) + phosphate = RNA(n) + a ribonucleoside 5'-diphosphate</text>
        <dbReference type="Rhea" id="RHEA:22096"/>
        <dbReference type="Rhea" id="RHEA-COMP:14527"/>
        <dbReference type="Rhea" id="RHEA-COMP:17342"/>
        <dbReference type="ChEBI" id="CHEBI:43474"/>
        <dbReference type="ChEBI" id="CHEBI:57930"/>
        <dbReference type="ChEBI" id="CHEBI:140395"/>
        <dbReference type="EC" id="2.7.7.8"/>
    </reaction>
</comment>
<comment type="cofactor">
    <cofactor evidence="1">
        <name>Mg(2+)</name>
        <dbReference type="ChEBI" id="CHEBI:18420"/>
    </cofactor>
</comment>
<comment type="subcellular location">
    <subcellularLocation>
        <location evidence="1">Cytoplasm</location>
    </subcellularLocation>
</comment>
<comment type="similarity">
    <text evidence="1">Belongs to the polyribonucleotide nucleotidyltransferase family.</text>
</comment>
<name>PNP_DICT6</name>
<dbReference type="EC" id="2.7.7.8" evidence="1"/>
<dbReference type="EMBL" id="CP001146">
    <property type="protein sequence ID" value="ACI20014.1"/>
    <property type="molecule type" value="Genomic_DNA"/>
</dbReference>
<dbReference type="RefSeq" id="WP_012548646.1">
    <property type="nucleotide sequence ID" value="NC_011297.1"/>
</dbReference>
<dbReference type="SMR" id="B5YEB0"/>
<dbReference type="STRING" id="309799.DICTH_1018"/>
<dbReference type="PaxDb" id="309799-DICTH_1018"/>
<dbReference type="KEGG" id="dth:DICTH_1018"/>
<dbReference type="eggNOG" id="COG1185">
    <property type="taxonomic scope" value="Bacteria"/>
</dbReference>
<dbReference type="HOGENOM" id="CLU_004217_2_2_0"/>
<dbReference type="OrthoDB" id="9804305at2"/>
<dbReference type="Proteomes" id="UP000001733">
    <property type="component" value="Chromosome"/>
</dbReference>
<dbReference type="GO" id="GO:0005829">
    <property type="term" value="C:cytosol"/>
    <property type="evidence" value="ECO:0007669"/>
    <property type="project" value="TreeGrafter"/>
</dbReference>
<dbReference type="GO" id="GO:0000175">
    <property type="term" value="F:3'-5'-RNA exonuclease activity"/>
    <property type="evidence" value="ECO:0007669"/>
    <property type="project" value="TreeGrafter"/>
</dbReference>
<dbReference type="GO" id="GO:0000287">
    <property type="term" value="F:magnesium ion binding"/>
    <property type="evidence" value="ECO:0007669"/>
    <property type="project" value="UniProtKB-UniRule"/>
</dbReference>
<dbReference type="GO" id="GO:0004654">
    <property type="term" value="F:polyribonucleotide nucleotidyltransferase activity"/>
    <property type="evidence" value="ECO:0007669"/>
    <property type="project" value="UniProtKB-UniRule"/>
</dbReference>
<dbReference type="GO" id="GO:0003723">
    <property type="term" value="F:RNA binding"/>
    <property type="evidence" value="ECO:0007669"/>
    <property type="project" value="UniProtKB-UniRule"/>
</dbReference>
<dbReference type="GO" id="GO:0006402">
    <property type="term" value="P:mRNA catabolic process"/>
    <property type="evidence" value="ECO:0007669"/>
    <property type="project" value="UniProtKB-UniRule"/>
</dbReference>
<dbReference type="GO" id="GO:0006396">
    <property type="term" value="P:RNA processing"/>
    <property type="evidence" value="ECO:0007669"/>
    <property type="project" value="InterPro"/>
</dbReference>
<dbReference type="CDD" id="cd02393">
    <property type="entry name" value="KH-I_PNPase"/>
    <property type="match status" value="1"/>
</dbReference>
<dbReference type="CDD" id="cd11363">
    <property type="entry name" value="RNase_PH_PNPase_1"/>
    <property type="match status" value="1"/>
</dbReference>
<dbReference type="CDD" id="cd11364">
    <property type="entry name" value="RNase_PH_PNPase_2"/>
    <property type="match status" value="1"/>
</dbReference>
<dbReference type="FunFam" id="3.30.1370.10:FF:000001">
    <property type="entry name" value="Polyribonucleotide nucleotidyltransferase"/>
    <property type="match status" value="1"/>
</dbReference>
<dbReference type="FunFam" id="3.30.230.70:FF:000001">
    <property type="entry name" value="Polyribonucleotide nucleotidyltransferase"/>
    <property type="match status" value="1"/>
</dbReference>
<dbReference type="FunFam" id="3.30.230.70:FF:000086">
    <property type="entry name" value="Polyribonucleotide nucleotidyltransferase"/>
    <property type="match status" value="1"/>
</dbReference>
<dbReference type="FunFam" id="2.40.50.140:FF:000189">
    <property type="entry name" value="Polyribonucleotide nucleotidyltransferase, putative"/>
    <property type="match status" value="1"/>
</dbReference>
<dbReference type="Gene3D" id="3.30.230.70">
    <property type="entry name" value="GHMP Kinase, N-terminal domain"/>
    <property type="match status" value="2"/>
</dbReference>
<dbReference type="Gene3D" id="3.30.1370.10">
    <property type="entry name" value="K Homology domain, type 1"/>
    <property type="match status" value="1"/>
</dbReference>
<dbReference type="Gene3D" id="2.40.50.140">
    <property type="entry name" value="Nucleic acid-binding proteins"/>
    <property type="match status" value="1"/>
</dbReference>
<dbReference type="HAMAP" id="MF_01595">
    <property type="entry name" value="PNPase"/>
    <property type="match status" value="1"/>
</dbReference>
<dbReference type="InterPro" id="IPR001247">
    <property type="entry name" value="ExoRNase_PH_dom1"/>
</dbReference>
<dbReference type="InterPro" id="IPR015847">
    <property type="entry name" value="ExoRNase_PH_dom2"/>
</dbReference>
<dbReference type="InterPro" id="IPR036345">
    <property type="entry name" value="ExoRNase_PH_dom2_sf"/>
</dbReference>
<dbReference type="InterPro" id="IPR004087">
    <property type="entry name" value="KH_dom"/>
</dbReference>
<dbReference type="InterPro" id="IPR004088">
    <property type="entry name" value="KH_dom_type_1"/>
</dbReference>
<dbReference type="InterPro" id="IPR036612">
    <property type="entry name" value="KH_dom_type_1_sf"/>
</dbReference>
<dbReference type="InterPro" id="IPR012340">
    <property type="entry name" value="NA-bd_OB-fold"/>
</dbReference>
<dbReference type="InterPro" id="IPR012162">
    <property type="entry name" value="PNPase"/>
</dbReference>
<dbReference type="InterPro" id="IPR027408">
    <property type="entry name" value="PNPase/RNase_PH_dom_sf"/>
</dbReference>
<dbReference type="InterPro" id="IPR015848">
    <property type="entry name" value="PNPase_PH_RNA-bd_bac/org-type"/>
</dbReference>
<dbReference type="InterPro" id="IPR036456">
    <property type="entry name" value="PNPase_PH_RNA-bd_sf"/>
</dbReference>
<dbReference type="InterPro" id="IPR020568">
    <property type="entry name" value="Ribosomal_Su5_D2-typ_SF"/>
</dbReference>
<dbReference type="InterPro" id="IPR003029">
    <property type="entry name" value="S1_domain"/>
</dbReference>
<dbReference type="NCBIfam" id="TIGR03591">
    <property type="entry name" value="polynuc_phos"/>
    <property type="match status" value="1"/>
</dbReference>
<dbReference type="NCBIfam" id="NF008805">
    <property type="entry name" value="PRK11824.1"/>
    <property type="match status" value="1"/>
</dbReference>
<dbReference type="PANTHER" id="PTHR11252">
    <property type="entry name" value="POLYRIBONUCLEOTIDE NUCLEOTIDYLTRANSFERASE"/>
    <property type="match status" value="1"/>
</dbReference>
<dbReference type="PANTHER" id="PTHR11252:SF0">
    <property type="entry name" value="POLYRIBONUCLEOTIDE NUCLEOTIDYLTRANSFERASE 1, MITOCHONDRIAL"/>
    <property type="match status" value="1"/>
</dbReference>
<dbReference type="Pfam" id="PF00013">
    <property type="entry name" value="KH_1"/>
    <property type="match status" value="1"/>
</dbReference>
<dbReference type="Pfam" id="PF03726">
    <property type="entry name" value="PNPase"/>
    <property type="match status" value="1"/>
</dbReference>
<dbReference type="Pfam" id="PF01138">
    <property type="entry name" value="RNase_PH"/>
    <property type="match status" value="2"/>
</dbReference>
<dbReference type="Pfam" id="PF03725">
    <property type="entry name" value="RNase_PH_C"/>
    <property type="match status" value="1"/>
</dbReference>
<dbReference type="Pfam" id="PF00575">
    <property type="entry name" value="S1"/>
    <property type="match status" value="1"/>
</dbReference>
<dbReference type="PIRSF" id="PIRSF005499">
    <property type="entry name" value="PNPase"/>
    <property type="match status" value="1"/>
</dbReference>
<dbReference type="SMART" id="SM00322">
    <property type="entry name" value="KH"/>
    <property type="match status" value="1"/>
</dbReference>
<dbReference type="SMART" id="SM00316">
    <property type="entry name" value="S1"/>
    <property type="match status" value="1"/>
</dbReference>
<dbReference type="SUPFAM" id="SSF54791">
    <property type="entry name" value="Eukaryotic type KH-domain (KH-domain type I)"/>
    <property type="match status" value="1"/>
</dbReference>
<dbReference type="SUPFAM" id="SSF50249">
    <property type="entry name" value="Nucleic acid-binding proteins"/>
    <property type="match status" value="1"/>
</dbReference>
<dbReference type="SUPFAM" id="SSF46915">
    <property type="entry name" value="Polynucleotide phosphorylase/guanosine pentaphosphate synthase (PNPase/GPSI), domain 3"/>
    <property type="match status" value="1"/>
</dbReference>
<dbReference type="SUPFAM" id="SSF55666">
    <property type="entry name" value="Ribonuclease PH domain 2-like"/>
    <property type="match status" value="2"/>
</dbReference>
<dbReference type="SUPFAM" id="SSF54211">
    <property type="entry name" value="Ribosomal protein S5 domain 2-like"/>
    <property type="match status" value="2"/>
</dbReference>
<dbReference type="PROSITE" id="PS50084">
    <property type="entry name" value="KH_TYPE_1"/>
    <property type="match status" value="1"/>
</dbReference>
<dbReference type="PROSITE" id="PS50126">
    <property type="entry name" value="S1"/>
    <property type="match status" value="1"/>
</dbReference>
<keyword id="KW-0963">Cytoplasm</keyword>
<keyword id="KW-0460">Magnesium</keyword>
<keyword id="KW-0479">Metal-binding</keyword>
<keyword id="KW-0548">Nucleotidyltransferase</keyword>
<keyword id="KW-0694">RNA-binding</keyword>
<keyword id="KW-0808">Transferase</keyword>
<proteinExistence type="inferred from homology"/>
<feature type="chain" id="PRO_1000185735" description="Polyribonucleotide nucleotidyltransferase">
    <location>
        <begin position="1"/>
        <end position="693"/>
    </location>
</feature>
<feature type="domain" description="KH" evidence="1">
    <location>
        <begin position="552"/>
        <end position="611"/>
    </location>
</feature>
<feature type="domain" description="S1 motif" evidence="1">
    <location>
        <begin position="621"/>
        <end position="691"/>
    </location>
</feature>
<feature type="binding site" evidence="1">
    <location>
        <position position="485"/>
    </location>
    <ligand>
        <name>Mg(2+)</name>
        <dbReference type="ChEBI" id="CHEBI:18420"/>
    </ligand>
</feature>
<feature type="binding site" evidence="1">
    <location>
        <position position="491"/>
    </location>
    <ligand>
        <name>Mg(2+)</name>
        <dbReference type="ChEBI" id="CHEBI:18420"/>
    </ligand>
</feature>
<organism>
    <name type="scientific">Dictyoglomus thermophilum (strain ATCC 35947 / DSM 3960 / H-6-12)</name>
    <dbReference type="NCBI Taxonomy" id="309799"/>
    <lineage>
        <taxon>Bacteria</taxon>
        <taxon>Pseudomonadati</taxon>
        <taxon>Dictyoglomota</taxon>
        <taxon>Dictyoglomia</taxon>
        <taxon>Dictyoglomales</taxon>
        <taxon>Dictyoglomaceae</taxon>
        <taxon>Dictyoglomus</taxon>
    </lineage>
</organism>
<accession>B5YEB0</accession>
<evidence type="ECO:0000255" key="1">
    <source>
        <dbReference type="HAMAP-Rule" id="MF_01595"/>
    </source>
</evidence>
<protein>
    <recommendedName>
        <fullName evidence="1">Polyribonucleotide nucleotidyltransferase</fullName>
        <ecNumber evidence="1">2.7.7.8</ecNumber>
    </recommendedName>
    <alternativeName>
        <fullName evidence="1">Polynucleotide phosphorylase</fullName>
        <shortName evidence="1">PNPase</shortName>
    </alternativeName>
</protein>
<reference key="1">
    <citation type="journal article" date="2014" name="Genome Announc.">
        <title>Complete Genome Sequence of the Extreme Thermophile Dictyoglomus thermophilum H-6-12.</title>
        <authorList>
            <person name="Coil D.A."/>
            <person name="Badger J.H."/>
            <person name="Forberger H.C."/>
            <person name="Riggs F."/>
            <person name="Madupu R."/>
            <person name="Fedorova N."/>
            <person name="Ward N."/>
            <person name="Robb F.T."/>
            <person name="Eisen J.A."/>
        </authorList>
    </citation>
    <scope>NUCLEOTIDE SEQUENCE [LARGE SCALE GENOMIC DNA]</scope>
    <source>
        <strain>ATCC 35947 / DSM 3960 / H-6-12</strain>
    </source>
</reference>
<gene>
    <name evidence="1" type="primary">pnp</name>
    <name type="ordered locus">DICTH_1018</name>
</gene>
<sequence>MRQVCSFKREFAGKELKIDIGKVAWQATGAALVQYGETTVLVTVVASEDKKEDVDFFPLTVEYVERLYAAGKIPGGFFKREGKPTEPEILFARLIDRPLRPLFAKDFRNEVQVIVTVLSYDHENSTDIPSIIGASCAIILAGLPFKGPIGAVRIGWDGNEWYINPPVTLSNSLLLDLVVAGTKDAVLMIEGDGKEVPEDIFLEGIIKAHSAMLDVINFQEEILSQINPAPFNYDPFVVDERLKRAVLDYVTVDQIRDAIFTPSKSERQKALEDLKKKVIEHFKPIYGEITAQVDEIINQEAKKILSQVVLEEKRRVDGRKLNEIRPVSCEVGVLKRVHGSALFQRGETQVLSVVTLGAGEEQIIESVIESEPKRYIHHYNFPPFSVGEAKPLRGPKRREIGHGALAERALLPLIPKEEEFPYTIRVVSEVLSSNGSTSMASVCGSSLSLMDAGVPIKTHVAGVAMGLIKEGDRFEVLTDIQGLEDALGGMDFKIAGTRNGITAVQLDIKVDGLSYEIIERTLKQAKEARYQILDIMEKTIPQPRPEISPYAPRIMVLEINPSKIGDLIGPSGKNIKKIIEETHTTINIKPEGLVYISAPDQESAEKAAQMVQDYTRDIKEGDIFLGKVIRVTDYGAFVEILPGKIGLLHISKYKTTGTGKNQTREEINLGDEILIKVDSIDSSGRISLTRKDL</sequence>